<sequence>MKLWDILATCLLLLSSVSTRPLFHKLQPSKRAVVRSESPALDPIIDSQPETSNPKQASMEEQYDLTGLYPEQFEDVMDFIEATLGRLRRSSDVEPQMKRDRVRQKAAANTEKSGGRGRGERKRSRGRARSRDDRVKGQGRGCLLKEIHLNVTDLDLGYRTKEELIFRYCSGPCHDAETNYDKILNNLTHNKKLDKDTPSRTCCRPIAFDDDISFLDDSLEYHTLKKHSAKKCACV</sequence>
<dbReference type="EMBL" id="AF329853">
    <property type="protein sequence ID" value="AAK11259.1"/>
    <property type="molecule type" value="mRNA"/>
</dbReference>
<dbReference type="PDB" id="7AB8">
    <property type="method" value="X-ray"/>
    <property type="resolution" value="2.20 A"/>
    <property type="chains" value="B=138-235"/>
</dbReference>
<dbReference type="PDB" id="7AML">
    <property type="method" value="EM"/>
    <property type="resolution" value="3.50 A"/>
    <property type="chains" value="C/F=135-235"/>
</dbReference>
<dbReference type="PDB" id="8OS6">
    <property type="method" value="X-ray"/>
    <property type="resolution" value="2.66 A"/>
    <property type="chains" value="B/D/F/H/J/L/N/P/R/T=137-235"/>
</dbReference>
<dbReference type="PDBsum" id="7AB8"/>
<dbReference type="PDBsum" id="7AML"/>
<dbReference type="PDBsum" id="8OS6"/>
<dbReference type="EMDB" id="EMD-11822"/>
<dbReference type="EMDB" id="EMD-18400"/>
<dbReference type="EMDB" id="EMD-18651"/>
<dbReference type="SMR" id="Q98TU0"/>
<dbReference type="FunCoup" id="Q98TU0">
    <property type="interactions" value="1584"/>
</dbReference>
<dbReference type="STRING" id="7955.ENSDARP00000124666"/>
<dbReference type="GlyCosmos" id="Q98TU0">
    <property type="glycosylation" value="2 sites, No reported glycans"/>
</dbReference>
<dbReference type="PaxDb" id="7955-ENSDARP00000124666"/>
<dbReference type="AGR" id="ZFIN:ZDB-GENE-010226-1"/>
<dbReference type="ZFIN" id="ZDB-GENE-010226-1">
    <property type="gene designation" value="gdnfa"/>
</dbReference>
<dbReference type="eggNOG" id="ENOG502QWCH">
    <property type="taxonomic scope" value="Eukaryota"/>
</dbReference>
<dbReference type="InParanoid" id="Q98TU0"/>
<dbReference type="PhylomeDB" id="Q98TU0"/>
<dbReference type="PRO" id="PR:Q98TU0"/>
<dbReference type="Proteomes" id="UP000000437">
    <property type="component" value="Unplaced"/>
</dbReference>
<dbReference type="GO" id="GO:0005576">
    <property type="term" value="C:extracellular region"/>
    <property type="evidence" value="ECO:0000250"/>
    <property type="project" value="UniProtKB"/>
</dbReference>
<dbReference type="GO" id="GO:0005615">
    <property type="term" value="C:extracellular space"/>
    <property type="evidence" value="ECO:0000318"/>
    <property type="project" value="GO_Central"/>
</dbReference>
<dbReference type="GO" id="GO:0030116">
    <property type="term" value="F:glial cell-derived neurotrophic factor receptor binding"/>
    <property type="evidence" value="ECO:0007669"/>
    <property type="project" value="InterPro"/>
</dbReference>
<dbReference type="GO" id="GO:0008083">
    <property type="term" value="F:growth factor activity"/>
    <property type="evidence" value="ECO:0000250"/>
    <property type="project" value="UniProtKB"/>
</dbReference>
<dbReference type="GO" id="GO:0004709">
    <property type="term" value="F:MAP kinase kinase kinase activity"/>
    <property type="evidence" value="ECO:0000314"/>
    <property type="project" value="ZFIN"/>
</dbReference>
<dbReference type="GO" id="GO:0042803">
    <property type="term" value="F:protein homodimerization activity"/>
    <property type="evidence" value="ECO:0000250"/>
    <property type="project" value="UniProtKB"/>
</dbReference>
<dbReference type="GO" id="GO:0030971">
    <property type="term" value="F:receptor tyrosine kinase binding"/>
    <property type="evidence" value="ECO:0007669"/>
    <property type="project" value="InterPro"/>
</dbReference>
<dbReference type="GO" id="GO:0001658">
    <property type="term" value="P:branching involved in ureteric bud morphogenesis"/>
    <property type="evidence" value="ECO:0000250"/>
    <property type="project" value="UniProtKB"/>
</dbReference>
<dbReference type="GO" id="GO:0021536">
    <property type="term" value="P:diencephalon development"/>
    <property type="evidence" value="ECO:0000315"/>
    <property type="project" value="ZFIN"/>
</dbReference>
<dbReference type="GO" id="GO:0048484">
    <property type="term" value="P:enteric nervous system development"/>
    <property type="evidence" value="ECO:0000315"/>
    <property type="project" value="ZFIN"/>
</dbReference>
<dbReference type="GO" id="GO:0035860">
    <property type="term" value="P:glial cell-derived neurotrophic factor receptor signaling pathway"/>
    <property type="evidence" value="ECO:0000250"/>
    <property type="project" value="UniProtKB"/>
</dbReference>
<dbReference type="GO" id="GO:0001656">
    <property type="term" value="P:metanephros development"/>
    <property type="evidence" value="ECO:0000250"/>
    <property type="project" value="UniProtKB"/>
</dbReference>
<dbReference type="GO" id="GO:0048255">
    <property type="term" value="P:mRNA stabilization"/>
    <property type="evidence" value="ECO:0000250"/>
    <property type="project" value="UniProtKB"/>
</dbReference>
<dbReference type="GO" id="GO:0043524">
    <property type="term" value="P:negative regulation of neuron apoptotic process"/>
    <property type="evidence" value="ECO:0000250"/>
    <property type="project" value="UniProtKB"/>
</dbReference>
<dbReference type="GO" id="GO:0001755">
    <property type="term" value="P:neural crest cell migration"/>
    <property type="evidence" value="ECO:0000250"/>
    <property type="project" value="UniProtKB"/>
</dbReference>
<dbReference type="GO" id="GO:0031175">
    <property type="term" value="P:neuron projection development"/>
    <property type="evidence" value="ECO:0000250"/>
    <property type="project" value="UniProtKB"/>
</dbReference>
<dbReference type="GO" id="GO:0007422">
    <property type="term" value="P:peripheral nervous system development"/>
    <property type="evidence" value="ECO:0000318"/>
    <property type="project" value="GO_Central"/>
</dbReference>
<dbReference type="GO" id="GO:0030432">
    <property type="term" value="P:peristalsis"/>
    <property type="evidence" value="ECO:0000250"/>
    <property type="project" value="UniProtKB"/>
</dbReference>
<dbReference type="GO" id="GO:0090190">
    <property type="term" value="P:positive regulation of branching involved in ureteric bud morphogenesis"/>
    <property type="evidence" value="ECO:0000250"/>
    <property type="project" value="UniProtKB"/>
</dbReference>
<dbReference type="GO" id="GO:0045944">
    <property type="term" value="P:positive regulation of transcription by RNA polymerase II"/>
    <property type="evidence" value="ECO:0000250"/>
    <property type="project" value="UniProtKB"/>
</dbReference>
<dbReference type="GO" id="GO:0072107">
    <property type="term" value="P:positive regulation of ureteric bud formation"/>
    <property type="evidence" value="ECO:0000250"/>
    <property type="project" value="UniProtKB"/>
</dbReference>
<dbReference type="GO" id="GO:0021784">
    <property type="term" value="P:postganglionic parasympathetic fiber development"/>
    <property type="evidence" value="ECO:0000250"/>
    <property type="project" value="UniProtKB"/>
</dbReference>
<dbReference type="GO" id="GO:0065003">
    <property type="term" value="P:protein-containing complex assembly"/>
    <property type="evidence" value="ECO:0000353"/>
    <property type="project" value="ZFIN"/>
</dbReference>
<dbReference type="GO" id="GO:0051584">
    <property type="term" value="P:regulation of dopamine uptake involved in synaptic transmission"/>
    <property type="evidence" value="ECO:0000250"/>
    <property type="project" value="UniProtKB"/>
</dbReference>
<dbReference type="GO" id="GO:1904338">
    <property type="term" value="P:regulation of dopaminergic neuron differentiation"/>
    <property type="evidence" value="ECO:0000315"/>
    <property type="project" value="ZFIN"/>
</dbReference>
<dbReference type="GO" id="GO:0060688">
    <property type="term" value="P:regulation of morphogenesis of a branching structure"/>
    <property type="evidence" value="ECO:0000250"/>
    <property type="project" value="UniProtKB"/>
</dbReference>
<dbReference type="GO" id="GO:0048485">
    <property type="term" value="P:sympathetic nervous system development"/>
    <property type="evidence" value="ECO:0000250"/>
    <property type="project" value="UniProtKB"/>
</dbReference>
<dbReference type="CDD" id="cd19380">
    <property type="entry name" value="TGF_beta_GDNF"/>
    <property type="match status" value="1"/>
</dbReference>
<dbReference type="FunFam" id="2.10.90.10:FF:000015">
    <property type="entry name" value="Glial cell line-derived neurotrophic factor"/>
    <property type="match status" value="1"/>
</dbReference>
<dbReference type="Gene3D" id="2.10.90.10">
    <property type="entry name" value="Cystine-knot cytokines"/>
    <property type="match status" value="1"/>
</dbReference>
<dbReference type="InterPro" id="IPR029034">
    <property type="entry name" value="Cystine-knot_cytokine"/>
</dbReference>
<dbReference type="InterPro" id="IPR016649">
    <property type="entry name" value="GDNF"/>
</dbReference>
<dbReference type="InterPro" id="IPR043401">
    <property type="entry name" value="GDNF_fam"/>
</dbReference>
<dbReference type="InterPro" id="IPR047020">
    <property type="entry name" value="GDNF_TGF-b-like"/>
</dbReference>
<dbReference type="InterPro" id="IPR001839">
    <property type="entry name" value="TGF-b_C"/>
</dbReference>
<dbReference type="PANTHER" id="PTHR12173">
    <property type="entry name" value="GDNF SUBFAMILY OF TGF-BETA FAMILY"/>
    <property type="match status" value="1"/>
</dbReference>
<dbReference type="PANTHER" id="PTHR12173:SF1">
    <property type="entry name" value="GLIAL CELL LINE-DERIVED NEUROTROPHIC FACTOR"/>
    <property type="match status" value="1"/>
</dbReference>
<dbReference type="Pfam" id="PF00019">
    <property type="entry name" value="TGF_beta"/>
    <property type="match status" value="1"/>
</dbReference>
<dbReference type="PIRSF" id="PIRSF016238">
    <property type="entry name" value="GDNF"/>
    <property type="match status" value="1"/>
</dbReference>
<dbReference type="SUPFAM" id="SSF57501">
    <property type="entry name" value="Cystine-knot cytokines"/>
    <property type="match status" value="1"/>
</dbReference>
<dbReference type="PROSITE" id="PS51362">
    <property type="entry name" value="TGF_BETA_2"/>
    <property type="match status" value="1"/>
</dbReference>
<proteinExistence type="evidence at protein level"/>
<keyword id="KW-0002">3D-structure</keyword>
<keyword id="KW-0165">Cleavage on pair of basic residues</keyword>
<keyword id="KW-1015">Disulfide bond</keyword>
<keyword id="KW-0325">Glycoprotein</keyword>
<keyword id="KW-0339">Growth factor</keyword>
<keyword id="KW-1185">Reference proteome</keyword>
<keyword id="KW-0964">Secreted</keyword>
<keyword id="KW-0732">Signal</keyword>
<accession>Q98TU0</accession>
<organism>
    <name type="scientific">Danio rerio</name>
    <name type="common">Zebrafish</name>
    <name type="synonym">Brachydanio rerio</name>
    <dbReference type="NCBI Taxonomy" id="7955"/>
    <lineage>
        <taxon>Eukaryota</taxon>
        <taxon>Metazoa</taxon>
        <taxon>Chordata</taxon>
        <taxon>Craniata</taxon>
        <taxon>Vertebrata</taxon>
        <taxon>Euteleostomi</taxon>
        <taxon>Actinopterygii</taxon>
        <taxon>Neopterygii</taxon>
        <taxon>Teleostei</taxon>
        <taxon>Ostariophysi</taxon>
        <taxon>Cypriniformes</taxon>
        <taxon>Danionidae</taxon>
        <taxon>Danioninae</taxon>
        <taxon>Danio</taxon>
    </lineage>
</organism>
<gene>
    <name evidence="8" type="primary">gdnf</name>
</gene>
<comment type="function">
    <text evidence="1 5">Neurotrophic factor that enhances survival and morphological differentiation of dopaminergic neurons and increases their high-affinity dopamine uptake (PubMed:11237470). Acts by binding to its coreceptor, GFRA1, leading to autophosphorylation and activation of the RET receptor (By similarity).</text>
</comment>
<comment type="subunit">
    <text evidence="1">Homodimer; disulfide-linked. Interacts with GFRA1 coreceptor and RET: forms a 2:2:2 ternary complex composed of GDNF ligand, GFRA1 and RET receptor.</text>
</comment>
<comment type="subcellular location">
    <subcellularLocation>
        <location evidence="1">Secreted</location>
    </subcellularLocation>
</comment>
<comment type="tissue specificity">
    <text evidence="5">First expressed at 14 hours post-fertilization (hpf) in the ventral half of anterior somites and in intermediate mesoderm. Ventral somitic expression persists and extends more posteriorly over the next 12 hours. Expressed throughout the ventral trunk mesoderm and endoderm at 24 hpf. By 30 hpf, somitic expression ceases and by 36 hpf, expression becomes restricted to the endodermal cells forming the gut, with expression along the whole length of the developing gut tube at 72 hpf.</text>
</comment>
<comment type="similarity">
    <text evidence="3">Belongs to the TGF-beta family. GDNF subfamily.</text>
</comment>
<protein>
    <recommendedName>
        <fullName evidence="6">Glial cell line-derived neurotrophic factor</fullName>
        <shortName evidence="6">zGDNF</shortName>
    </recommendedName>
</protein>
<name>GDNF_DANRE</name>
<evidence type="ECO:0000250" key="1">
    <source>
        <dbReference type="UniProtKB" id="P39905"/>
    </source>
</evidence>
<evidence type="ECO:0000250" key="2">
    <source>
        <dbReference type="UniProtKB" id="Q07731"/>
    </source>
</evidence>
<evidence type="ECO:0000255" key="3"/>
<evidence type="ECO:0000256" key="4">
    <source>
        <dbReference type="SAM" id="MobiDB-lite"/>
    </source>
</evidence>
<evidence type="ECO:0000269" key="5">
    <source>
    </source>
</evidence>
<evidence type="ECO:0000303" key="6">
    <source>
    </source>
</evidence>
<evidence type="ECO:0000305" key="7"/>
<evidence type="ECO:0000312" key="8">
    <source>
        <dbReference type="EMBL" id="AAK11259.1"/>
    </source>
</evidence>
<evidence type="ECO:0007829" key="9">
    <source>
        <dbReference type="PDB" id="7AB8"/>
    </source>
</evidence>
<feature type="signal peptide" evidence="3">
    <location>
        <begin position="1"/>
        <end position="19"/>
    </location>
</feature>
<feature type="propeptide" id="PRO_0000292932" evidence="2">
    <location>
        <begin position="20"/>
        <end position="87"/>
    </location>
</feature>
<feature type="chain" id="PRO_0000292933" description="Glial cell line-derived neurotrophic factor" evidence="3">
    <location>
        <begin position="90"/>
        <end position="235"/>
    </location>
</feature>
<feature type="region of interest" description="Disordered" evidence="4">
    <location>
        <begin position="34"/>
        <end position="60"/>
    </location>
</feature>
<feature type="region of interest" description="Disordered" evidence="4">
    <location>
        <begin position="91"/>
        <end position="137"/>
    </location>
</feature>
<feature type="compositionally biased region" description="Basic residues" evidence="4">
    <location>
        <begin position="119"/>
        <end position="128"/>
    </location>
</feature>
<feature type="glycosylation site" description="N-linked (GlcNAc...) asparagine" evidence="3">
    <location>
        <position position="150"/>
    </location>
</feature>
<feature type="glycosylation site" description="N-linked (GlcNAc...) asparagine" evidence="3">
    <location>
        <position position="186"/>
    </location>
</feature>
<feature type="disulfide bond" evidence="2">
    <location>
        <begin position="142"/>
        <end position="203"/>
    </location>
</feature>
<feature type="disulfide bond" evidence="2">
    <location>
        <begin position="169"/>
        <end position="232"/>
    </location>
</feature>
<feature type="disulfide bond" evidence="2">
    <location>
        <begin position="173"/>
        <end position="234"/>
    </location>
</feature>
<feature type="disulfide bond" description="Interchain" evidence="2">
    <location>
        <position position="202"/>
    </location>
</feature>
<feature type="strand" evidence="9">
    <location>
        <begin position="143"/>
        <end position="150"/>
    </location>
</feature>
<feature type="helix" evidence="9">
    <location>
        <begin position="151"/>
        <end position="154"/>
    </location>
</feature>
<feature type="strand" evidence="9">
    <location>
        <begin position="163"/>
        <end position="171"/>
    </location>
</feature>
<feature type="helix" evidence="9">
    <location>
        <begin position="174"/>
        <end position="176"/>
    </location>
</feature>
<feature type="helix" evidence="9">
    <location>
        <begin position="179"/>
        <end position="190"/>
    </location>
</feature>
<feature type="turn" evidence="9">
    <location>
        <begin position="191"/>
        <end position="195"/>
    </location>
</feature>
<feature type="strand" evidence="9">
    <location>
        <begin position="203"/>
        <end position="208"/>
    </location>
</feature>
<feature type="strand" evidence="9">
    <location>
        <begin position="212"/>
        <end position="215"/>
    </location>
</feature>
<feature type="strand" evidence="9">
    <location>
        <begin position="221"/>
        <end position="224"/>
    </location>
</feature>
<feature type="strand" evidence="9">
    <location>
        <begin position="228"/>
        <end position="234"/>
    </location>
</feature>
<reference evidence="7 8" key="1">
    <citation type="journal article" date="2001" name="Dev. Biol.">
        <title>Functional analysis of zebrafish GDNF.</title>
        <authorList>
            <person name="Shepherd I.T."/>
            <person name="Beattie C.E."/>
            <person name="Raible D.W."/>
        </authorList>
    </citation>
    <scope>NUCLEOTIDE SEQUENCE [MRNA]</scope>
    <scope>FUNCTION</scope>
    <scope>TISSUE SPECIFICITY</scope>
    <source>
        <tissue evidence="5">Glial cell</tissue>
    </source>
</reference>